<organism>
    <name type="scientific">Drosophila simulans</name>
    <name type="common">Fruit fly</name>
    <dbReference type="NCBI Taxonomy" id="7240"/>
    <lineage>
        <taxon>Eukaryota</taxon>
        <taxon>Metazoa</taxon>
        <taxon>Ecdysozoa</taxon>
        <taxon>Arthropoda</taxon>
        <taxon>Hexapoda</taxon>
        <taxon>Insecta</taxon>
        <taxon>Pterygota</taxon>
        <taxon>Neoptera</taxon>
        <taxon>Endopterygota</taxon>
        <taxon>Diptera</taxon>
        <taxon>Brachycera</taxon>
        <taxon>Muscomorpha</taxon>
        <taxon>Ephydroidea</taxon>
        <taxon>Drosophilidae</taxon>
        <taxon>Drosophila</taxon>
        <taxon>Sophophora</taxon>
    </lineage>
</organism>
<keyword id="KW-0217">Developmental protein</keyword>
<keyword id="KW-1015">Disulfide bond</keyword>
<keyword id="KW-1185">Reference proteome</keyword>
<keyword id="KW-0964">Secreted</keyword>
<keyword id="KW-0732">Signal</keyword>
<protein>
    <recommendedName>
        <fullName>Mesencephalic astrocyte-derived neurotrophic factor homolog</fullName>
    </recommendedName>
    <alternativeName>
        <fullName>MANF/CDNF-like protein</fullName>
    </alternativeName>
</protein>
<feature type="signal peptide" evidence="3">
    <location>
        <begin position="1"/>
        <end position="22"/>
    </location>
</feature>
<feature type="chain" id="PRO_0000390945" description="Mesencephalic astrocyte-derived neurotrophic factor homolog">
    <location>
        <begin position="23"/>
        <end position="173"/>
    </location>
</feature>
<feature type="disulfide bond" evidence="1">
    <location>
        <begin position="28"/>
        <end position="114"/>
    </location>
</feature>
<feature type="disulfide bond" evidence="1">
    <location>
        <begin position="31"/>
        <end position="103"/>
    </location>
</feature>
<feature type="disulfide bond" evidence="1">
    <location>
        <begin position="61"/>
        <end position="72"/>
    </location>
</feature>
<feature type="disulfide bond" evidence="1">
    <location>
        <begin position="148"/>
        <end position="151"/>
    </location>
</feature>
<reference evidence="4" key="1">
    <citation type="journal article" date="2007" name="Nature">
        <title>Evolution of genes and genomes on the Drosophila phylogeny.</title>
        <authorList>
            <consortium name="Drosophila 12 genomes consortium"/>
        </authorList>
    </citation>
    <scope>NUCLEOTIDE SEQUENCE [LARGE SCALE GENOMIC DNA]</scope>
</reference>
<comment type="function">
    <text evidence="2">Required during the maturation of the embryonic nervous system for maintenance of neuronal and cuticular connectivity. Essential for maintenance of dopaminergic neurons and dopamine levels (By similarity).</text>
</comment>
<comment type="subcellular location">
    <subcellularLocation>
        <location evidence="2">Secreted</location>
    </subcellularLocation>
</comment>
<comment type="similarity">
    <text evidence="3">Belongs to the ARMET family.</text>
</comment>
<accession>B4QX46</accession>
<dbReference type="EMBL" id="CM000364">
    <property type="protein sequence ID" value="EDX12700.1"/>
    <property type="molecule type" value="Genomic_DNA"/>
</dbReference>
<dbReference type="SMR" id="B4QX46"/>
<dbReference type="STRING" id="7240.B4QX46"/>
<dbReference type="EnsemblMetazoa" id="FBtr0219003">
    <property type="protein sequence ID" value="FBpp0217495"/>
    <property type="gene ID" value="FBgn0190600"/>
</dbReference>
<dbReference type="EnsemblMetazoa" id="XM_002103161.4">
    <property type="protein sequence ID" value="XP_002103197.1"/>
    <property type="gene ID" value="LOC6727838"/>
</dbReference>
<dbReference type="GeneID" id="6727838"/>
<dbReference type="KEGG" id="dsi:Dsimw501_GD19093"/>
<dbReference type="CTD" id="7873"/>
<dbReference type="HOGENOM" id="CLU_099080_1_0_1"/>
<dbReference type="OMA" id="WSMPADK"/>
<dbReference type="OrthoDB" id="5597848at2759"/>
<dbReference type="PhylomeDB" id="B4QX46"/>
<dbReference type="ChiTaRS" id="Manf">
    <property type="organism name" value="fly"/>
</dbReference>
<dbReference type="Proteomes" id="UP000000304">
    <property type="component" value="Chromosome 3R"/>
</dbReference>
<dbReference type="Bgee" id="FBgn0190600">
    <property type="expression patterns" value="Expressed in embryo and 3 other cell types or tissues"/>
</dbReference>
<dbReference type="GO" id="GO:0005783">
    <property type="term" value="C:endoplasmic reticulum"/>
    <property type="evidence" value="ECO:0007669"/>
    <property type="project" value="EnsemblMetazoa"/>
</dbReference>
<dbReference type="GO" id="GO:0005615">
    <property type="term" value="C:extracellular space"/>
    <property type="evidence" value="ECO:0007669"/>
    <property type="project" value="TreeGrafter"/>
</dbReference>
<dbReference type="GO" id="GO:0045202">
    <property type="term" value="C:synapse"/>
    <property type="evidence" value="ECO:0007669"/>
    <property type="project" value="GOC"/>
</dbReference>
<dbReference type="GO" id="GO:0042417">
    <property type="term" value="P:dopamine metabolic process"/>
    <property type="evidence" value="ECO:0007669"/>
    <property type="project" value="EnsemblMetazoa"/>
</dbReference>
<dbReference type="GO" id="GO:0071542">
    <property type="term" value="P:dopaminergic neuron differentiation"/>
    <property type="evidence" value="ECO:0007669"/>
    <property type="project" value="TreeGrafter"/>
</dbReference>
<dbReference type="GO" id="GO:0070050">
    <property type="term" value="P:neuron cellular homeostasis"/>
    <property type="evidence" value="ECO:0007669"/>
    <property type="project" value="EnsemblMetazoa"/>
</dbReference>
<dbReference type="GO" id="GO:0031175">
    <property type="term" value="P:neuron projection development"/>
    <property type="evidence" value="ECO:0007669"/>
    <property type="project" value="EnsemblMetazoa"/>
</dbReference>
<dbReference type="GO" id="GO:0001963">
    <property type="term" value="P:synaptic transmission, dopaminergic"/>
    <property type="evidence" value="ECO:0007669"/>
    <property type="project" value="EnsemblMetazoa"/>
</dbReference>
<dbReference type="FunFam" id="1.10.225.10:FF:000003">
    <property type="entry name" value="Mesencephalic astrocyte-derived neurotrophic factor"/>
    <property type="match status" value="1"/>
</dbReference>
<dbReference type="FunFam" id="1.10.720.30:FF:000003">
    <property type="entry name" value="Mesencephalic astrocyte-derived neurotrophic factor"/>
    <property type="match status" value="1"/>
</dbReference>
<dbReference type="Gene3D" id="1.10.720.30">
    <property type="entry name" value="SAP domain"/>
    <property type="match status" value="1"/>
</dbReference>
<dbReference type="Gene3D" id="1.10.225.10">
    <property type="entry name" value="Saposin-like"/>
    <property type="match status" value="1"/>
</dbReference>
<dbReference type="InterPro" id="IPR045333">
    <property type="entry name" value="ARMET-like"/>
</dbReference>
<dbReference type="InterPro" id="IPR019345">
    <property type="entry name" value="ARMET_C"/>
</dbReference>
<dbReference type="InterPro" id="IPR045332">
    <property type="entry name" value="ARMET_N"/>
</dbReference>
<dbReference type="InterPro" id="IPR018247">
    <property type="entry name" value="EF_Hand_1_Ca_BS"/>
</dbReference>
<dbReference type="InterPro" id="IPR036361">
    <property type="entry name" value="SAP_dom_sf"/>
</dbReference>
<dbReference type="PANTHER" id="PTHR12990">
    <property type="entry name" value="ARMET-LIKE PROTEIN"/>
    <property type="match status" value="1"/>
</dbReference>
<dbReference type="PANTHER" id="PTHR12990:SF5">
    <property type="entry name" value="MESENCEPHALIC ASTROCYTE-DERIVED NEUROTROPHIC FACTOR HOMOLOG"/>
    <property type="match status" value="1"/>
</dbReference>
<dbReference type="Pfam" id="PF10208">
    <property type="entry name" value="ARMET_C"/>
    <property type="match status" value="1"/>
</dbReference>
<dbReference type="Pfam" id="PF20145">
    <property type="entry name" value="ARMET_N"/>
    <property type="match status" value="1"/>
</dbReference>
<dbReference type="SUPFAM" id="SSF68906">
    <property type="entry name" value="SAP domain"/>
    <property type="match status" value="1"/>
</dbReference>
<sequence>MKTWHMVVVIGFLATLAQTSLALKEEDCEVCVKTVRRFADSLDDSTKKDYKQIETAFKKFCKAQKNKEHRFCYYLGGLEESATGILNELSKPLSWSMPAEKICEKLKKKDAQICDLRYEKQIDLNSVDLKKLKVRDLKKILNDWDESCDGCLEKGDFIKRIEELKPKYSRSEL</sequence>
<proteinExistence type="inferred from homology"/>
<evidence type="ECO:0000250" key="1">
    <source>
        <dbReference type="UniProtKB" id="P55145"/>
    </source>
</evidence>
<evidence type="ECO:0000250" key="2">
    <source>
        <dbReference type="UniProtKB" id="Q9XZ63"/>
    </source>
</evidence>
<evidence type="ECO:0000255" key="3"/>
<evidence type="ECO:0000312" key="4">
    <source>
        <dbReference type="EMBL" id="EDX12700.1"/>
    </source>
</evidence>
<gene>
    <name evidence="2" type="primary">Manf</name>
    <name type="ORF">GD19093</name>
</gene>
<name>ARMET_DROSI</name>